<dbReference type="EMBL" id="AL132964">
    <property type="protein sequence ID" value="CAB62461.1"/>
    <property type="molecule type" value="Genomic_DNA"/>
</dbReference>
<dbReference type="EMBL" id="CP002686">
    <property type="protein sequence ID" value="AEE78558.1"/>
    <property type="molecule type" value="Genomic_DNA"/>
</dbReference>
<dbReference type="EMBL" id="AK118134">
    <property type="protein sequence ID" value="BAC42759.1"/>
    <property type="molecule type" value="mRNA"/>
</dbReference>
<dbReference type="EMBL" id="BT006123">
    <property type="protein sequence ID" value="AAP04108.1"/>
    <property type="molecule type" value="mRNA"/>
</dbReference>
<dbReference type="PIR" id="T46234">
    <property type="entry name" value="T46234"/>
</dbReference>
<dbReference type="RefSeq" id="NP_190526.1">
    <property type="nucleotide sequence ID" value="NM_114817.3"/>
</dbReference>
<dbReference type="SMR" id="Q9SCK2"/>
<dbReference type="FunCoup" id="Q9SCK2">
    <property type="interactions" value="3"/>
</dbReference>
<dbReference type="STRING" id="3702.Q9SCK2"/>
<dbReference type="GlyGen" id="Q9SCK2">
    <property type="glycosylation" value="1 site"/>
</dbReference>
<dbReference type="iPTMnet" id="Q9SCK2"/>
<dbReference type="PaxDb" id="3702-AT3G49570.1"/>
<dbReference type="EnsemblPlants" id="AT3G49570.1">
    <property type="protein sequence ID" value="AT3G49570.1"/>
    <property type="gene ID" value="AT3G49570"/>
</dbReference>
<dbReference type="GeneID" id="824119"/>
<dbReference type="Gramene" id="AT3G49570.1">
    <property type="protein sequence ID" value="AT3G49570.1"/>
    <property type="gene ID" value="AT3G49570"/>
</dbReference>
<dbReference type="KEGG" id="ath:AT3G49570"/>
<dbReference type="Araport" id="AT3G49570"/>
<dbReference type="TAIR" id="AT3G49570">
    <property type="gene designation" value="LSU3"/>
</dbReference>
<dbReference type="eggNOG" id="ENOG502SZ0Q">
    <property type="taxonomic scope" value="Eukaryota"/>
</dbReference>
<dbReference type="HOGENOM" id="CLU_152833_0_0_1"/>
<dbReference type="InParanoid" id="Q9SCK2"/>
<dbReference type="OMA" id="YESRIHF"/>
<dbReference type="OrthoDB" id="1888446at2759"/>
<dbReference type="PhylomeDB" id="Q9SCK2"/>
<dbReference type="PRO" id="PR:Q9SCK2"/>
<dbReference type="Proteomes" id="UP000006548">
    <property type="component" value="Chromosome 3"/>
</dbReference>
<dbReference type="ExpressionAtlas" id="Q9SCK2">
    <property type="expression patterns" value="baseline and differential"/>
</dbReference>
<dbReference type="GO" id="GO:0098869">
    <property type="term" value="P:cellular oxidant detoxification"/>
    <property type="evidence" value="ECO:0007669"/>
    <property type="project" value="InterPro"/>
</dbReference>
<dbReference type="InterPro" id="IPR039282">
    <property type="entry name" value="LSU"/>
</dbReference>
<dbReference type="PANTHER" id="PTHR34283">
    <property type="entry name" value="PROTEIN RESPONSE TO LOW SULFUR 1"/>
    <property type="match status" value="1"/>
</dbReference>
<dbReference type="PANTHER" id="PTHR34283:SF3">
    <property type="entry name" value="PROTEIN RESPONSE TO LOW SULFUR 3"/>
    <property type="match status" value="1"/>
</dbReference>
<dbReference type="Pfam" id="PF24980">
    <property type="entry name" value="LSU"/>
    <property type="match status" value="1"/>
</dbReference>
<proteinExistence type="predicted"/>
<keyword id="KW-0175">Coiled coil</keyword>
<keyword id="KW-1185">Reference proteome</keyword>
<feature type="chain" id="PRO_0000437694" description="Protein RESPONSE TO LOW SULFUR 3">
    <location>
        <begin position="1"/>
        <end position="97"/>
    </location>
</feature>
<feature type="coiled-coil region" evidence="1">
    <location>
        <begin position="8"/>
        <end position="42"/>
    </location>
</feature>
<protein>
    <recommendedName>
        <fullName evidence="2">Protein RESPONSE TO LOW SULFUR 3</fullName>
    </recommendedName>
</protein>
<reference key="1">
    <citation type="journal article" date="2000" name="Nature">
        <title>Sequence and analysis of chromosome 3 of the plant Arabidopsis thaliana.</title>
        <authorList>
            <person name="Salanoubat M."/>
            <person name="Lemcke K."/>
            <person name="Rieger M."/>
            <person name="Ansorge W."/>
            <person name="Unseld M."/>
            <person name="Fartmann B."/>
            <person name="Valle G."/>
            <person name="Bloecker H."/>
            <person name="Perez-Alonso M."/>
            <person name="Obermaier B."/>
            <person name="Delseny M."/>
            <person name="Boutry M."/>
            <person name="Grivell L.A."/>
            <person name="Mache R."/>
            <person name="Puigdomenech P."/>
            <person name="De Simone V."/>
            <person name="Choisne N."/>
            <person name="Artiguenave F."/>
            <person name="Robert C."/>
            <person name="Brottier P."/>
            <person name="Wincker P."/>
            <person name="Cattolico L."/>
            <person name="Weissenbach J."/>
            <person name="Saurin W."/>
            <person name="Quetier F."/>
            <person name="Schaefer M."/>
            <person name="Mueller-Auer S."/>
            <person name="Gabel C."/>
            <person name="Fuchs M."/>
            <person name="Benes V."/>
            <person name="Wurmbach E."/>
            <person name="Drzonek H."/>
            <person name="Erfle H."/>
            <person name="Jordan N."/>
            <person name="Bangert S."/>
            <person name="Wiedelmann R."/>
            <person name="Kranz H."/>
            <person name="Voss H."/>
            <person name="Holland R."/>
            <person name="Brandt P."/>
            <person name="Nyakatura G."/>
            <person name="Vezzi A."/>
            <person name="D'Angelo M."/>
            <person name="Pallavicini A."/>
            <person name="Toppo S."/>
            <person name="Simionati B."/>
            <person name="Conrad A."/>
            <person name="Hornischer K."/>
            <person name="Kauer G."/>
            <person name="Loehnert T.-H."/>
            <person name="Nordsiek G."/>
            <person name="Reichelt J."/>
            <person name="Scharfe M."/>
            <person name="Schoen O."/>
            <person name="Bargues M."/>
            <person name="Terol J."/>
            <person name="Climent J."/>
            <person name="Navarro P."/>
            <person name="Collado C."/>
            <person name="Perez-Perez A."/>
            <person name="Ottenwaelder B."/>
            <person name="Duchemin D."/>
            <person name="Cooke R."/>
            <person name="Laudie M."/>
            <person name="Berger-Llauro C."/>
            <person name="Purnelle B."/>
            <person name="Masuy D."/>
            <person name="de Haan M."/>
            <person name="Maarse A.C."/>
            <person name="Alcaraz J.-P."/>
            <person name="Cottet A."/>
            <person name="Casacuberta E."/>
            <person name="Monfort A."/>
            <person name="Argiriou A."/>
            <person name="Flores M."/>
            <person name="Liguori R."/>
            <person name="Vitale D."/>
            <person name="Mannhaupt G."/>
            <person name="Haase D."/>
            <person name="Schoof H."/>
            <person name="Rudd S."/>
            <person name="Zaccaria P."/>
            <person name="Mewes H.-W."/>
            <person name="Mayer K.F.X."/>
            <person name="Kaul S."/>
            <person name="Town C.D."/>
            <person name="Koo H.L."/>
            <person name="Tallon L.J."/>
            <person name="Jenkins J."/>
            <person name="Rooney T."/>
            <person name="Rizzo M."/>
            <person name="Walts A."/>
            <person name="Utterback T."/>
            <person name="Fujii C.Y."/>
            <person name="Shea T.P."/>
            <person name="Creasy T.H."/>
            <person name="Haas B."/>
            <person name="Maiti R."/>
            <person name="Wu D."/>
            <person name="Peterson J."/>
            <person name="Van Aken S."/>
            <person name="Pai G."/>
            <person name="Militscher J."/>
            <person name="Sellers P."/>
            <person name="Gill J.E."/>
            <person name="Feldblyum T.V."/>
            <person name="Preuss D."/>
            <person name="Lin X."/>
            <person name="Nierman W.C."/>
            <person name="Salzberg S.L."/>
            <person name="White O."/>
            <person name="Venter J.C."/>
            <person name="Fraser C.M."/>
            <person name="Kaneko T."/>
            <person name="Nakamura Y."/>
            <person name="Sato S."/>
            <person name="Kato T."/>
            <person name="Asamizu E."/>
            <person name="Sasamoto S."/>
            <person name="Kimura T."/>
            <person name="Idesawa K."/>
            <person name="Kawashima K."/>
            <person name="Kishida Y."/>
            <person name="Kiyokawa C."/>
            <person name="Kohara M."/>
            <person name="Matsumoto M."/>
            <person name="Matsuno A."/>
            <person name="Muraki A."/>
            <person name="Nakayama S."/>
            <person name="Nakazaki N."/>
            <person name="Shinpo S."/>
            <person name="Takeuchi C."/>
            <person name="Wada T."/>
            <person name="Watanabe A."/>
            <person name="Yamada M."/>
            <person name="Yasuda M."/>
            <person name="Tabata S."/>
        </authorList>
    </citation>
    <scope>NUCLEOTIDE SEQUENCE [LARGE SCALE GENOMIC DNA]</scope>
    <source>
        <strain>cv. Columbia</strain>
    </source>
</reference>
<reference key="2">
    <citation type="journal article" date="2017" name="Plant J.">
        <title>Araport11: a complete reannotation of the Arabidopsis thaliana reference genome.</title>
        <authorList>
            <person name="Cheng C.Y."/>
            <person name="Krishnakumar V."/>
            <person name="Chan A.P."/>
            <person name="Thibaud-Nissen F."/>
            <person name="Schobel S."/>
            <person name="Town C.D."/>
        </authorList>
    </citation>
    <scope>GENOME REANNOTATION</scope>
    <source>
        <strain>cv. Columbia</strain>
    </source>
</reference>
<reference key="3">
    <citation type="journal article" date="2002" name="Science">
        <title>Functional annotation of a full-length Arabidopsis cDNA collection.</title>
        <authorList>
            <person name="Seki M."/>
            <person name="Narusaka M."/>
            <person name="Kamiya A."/>
            <person name="Ishida J."/>
            <person name="Satou M."/>
            <person name="Sakurai T."/>
            <person name="Nakajima M."/>
            <person name="Enju A."/>
            <person name="Akiyama K."/>
            <person name="Oono Y."/>
            <person name="Muramatsu M."/>
            <person name="Hayashizaki Y."/>
            <person name="Kawai J."/>
            <person name="Carninci P."/>
            <person name="Itoh M."/>
            <person name="Ishii Y."/>
            <person name="Arakawa T."/>
            <person name="Shibata K."/>
            <person name="Shinagawa A."/>
            <person name="Shinozaki K."/>
        </authorList>
    </citation>
    <scope>NUCLEOTIDE SEQUENCE [LARGE SCALE MRNA]</scope>
    <source>
        <strain>cv. Columbia</strain>
    </source>
</reference>
<reference key="4">
    <citation type="journal article" date="2003" name="Science">
        <title>Empirical analysis of transcriptional activity in the Arabidopsis genome.</title>
        <authorList>
            <person name="Yamada K."/>
            <person name="Lim J."/>
            <person name="Dale J.M."/>
            <person name="Chen H."/>
            <person name="Shinn P."/>
            <person name="Palm C.J."/>
            <person name="Southwick A.M."/>
            <person name="Wu H.C."/>
            <person name="Kim C.J."/>
            <person name="Nguyen M."/>
            <person name="Pham P.K."/>
            <person name="Cheuk R.F."/>
            <person name="Karlin-Newmann G."/>
            <person name="Liu S.X."/>
            <person name="Lam B."/>
            <person name="Sakano H."/>
            <person name="Wu T."/>
            <person name="Yu G."/>
            <person name="Miranda M."/>
            <person name="Quach H.L."/>
            <person name="Tripp M."/>
            <person name="Chang C.H."/>
            <person name="Lee J.M."/>
            <person name="Toriumi M.J."/>
            <person name="Chan M.M."/>
            <person name="Tang C.C."/>
            <person name="Onodera C.S."/>
            <person name="Deng J.M."/>
            <person name="Akiyama K."/>
            <person name="Ansari Y."/>
            <person name="Arakawa T."/>
            <person name="Banh J."/>
            <person name="Banno F."/>
            <person name="Bowser L."/>
            <person name="Brooks S.Y."/>
            <person name="Carninci P."/>
            <person name="Chao Q."/>
            <person name="Choy N."/>
            <person name="Enju A."/>
            <person name="Goldsmith A.D."/>
            <person name="Gurjal M."/>
            <person name="Hansen N.F."/>
            <person name="Hayashizaki Y."/>
            <person name="Johnson-Hopson C."/>
            <person name="Hsuan V.W."/>
            <person name="Iida K."/>
            <person name="Karnes M."/>
            <person name="Khan S."/>
            <person name="Koesema E."/>
            <person name="Ishida J."/>
            <person name="Jiang P.X."/>
            <person name="Jones T."/>
            <person name="Kawai J."/>
            <person name="Kamiya A."/>
            <person name="Meyers C."/>
            <person name="Nakajima M."/>
            <person name="Narusaka M."/>
            <person name="Seki M."/>
            <person name="Sakurai T."/>
            <person name="Satou M."/>
            <person name="Tamse R."/>
            <person name="Vaysberg M."/>
            <person name="Wallender E.K."/>
            <person name="Wong C."/>
            <person name="Yamamura Y."/>
            <person name="Yuan S."/>
            <person name="Shinozaki K."/>
            <person name="Davis R.W."/>
            <person name="Theologis A."/>
            <person name="Ecker J.R."/>
        </authorList>
    </citation>
    <scope>NUCLEOTIDE SEQUENCE [LARGE SCALE MRNA]</scope>
    <source>
        <strain>cv. Columbia</strain>
    </source>
</reference>
<reference key="5">
    <citation type="journal article" date="2014" name="Front. Plant Sci.">
        <title>The family of LSU-like proteins.</title>
        <authorList>
            <person name="Sirko A."/>
            <person name="Wawrzynska A."/>
            <person name="Rodriguez M.C."/>
            <person name="Sektas P."/>
        </authorList>
    </citation>
    <scope>REVIEW</scope>
    <scope>GENE FAMILY</scope>
    <scope>NOMENCLATURE</scope>
</reference>
<accession>Q9SCK2</accession>
<evidence type="ECO:0000255" key="1"/>
<evidence type="ECO:0000303" key="2">
    <source>
    </source>
</evidence>
<evidence type="ECO:0000312" key="3">
    <source>
        <dbReference type="Araport" id="AT3G49570"/>
    </source>
</evidence>
<evidence type="ECO:0000312" key="4">
    <source>
        <dbReference type="EMBL" id="CAB62461.1"/>
    </source>
</evidence>
<name>LSU3_ARATH</name>
<organism>
    <name type="scientific">Arabidopsis thaliana</name>
    <name type="common">Mouse-ear cress</name>
    <dbReference type="NCBI Taxonomy" id="3702"/>
    <lineage>
        <taxon>Eukaryota</taxon>
        <taxon>Viridiplantae</taxon>
        <taxon>Streptophyta</taxon>
        <taxon>Embryophyta</taxon>
        <taxon>Tracheophyta</taxon>
        <taxon>Spermatophyta</taxon>
        <taxon>Magnoliopsida</taxon>
        <taxon>eudicotyledons</taxon>
        <taxon>Gunneridae</taxon>
        <taxon>Pentapetalae</taxon>
        <taxon>rosids</taxon>
        <taxon>malvids</taxon>
        <taxon>Brassicales</taxon>
        <taxon>Brassicaceae</taxon>
        <taxon>Camelineae</taxon>
        <taxon>Arabidopsis</taxon>
    </lineage>
</organism>
<sequence>MGKGGGYVTVAAEEVEELRRRNGELEREMEEMKKEMVQLWRRTVVAEEAEERLCSQLAELEVESLDQARDYHSRIVFLMDQISRLSSSSLEVVVTNS</sequence>
<gene>
    <name evidence="2" type="primary">LSU3</name>
    <name evidence="3" type="ordered locus">At3g49570</name>
    <name evidence="4" type="ORF">T9C5.160</name>
</gene>